<sequence length="57" mass="6478">MGQEQGTPWILSTGHISTQKGEDGQKTPKLEHHNSTQLMGHYQKTMNQVVMPKQIVY</sequence>
<dbReference type="EMBL" id="CY021827">
    <property type="protein sequence ID" value="ABP49490.1"/>
    <property type="molecule type" value="Viral_cRNA"/>
</dbReference>
<dbReference type="Proteomes" id="UP000007556">
    <property type="component" value="Genome"/>
</dbReference>
<dbReference type="GO" id="GO:0044164">
    <property type="term" value="C:host cell cytosol"/>
    <property type="evidence" value="ECO:0007669"/>
    <property type="project" value="UniProtKB-SubCell"/>
</dbReference>
<dbReference type="GO" id="GO:0042025">
    <property type="term" value="C:host cell nucleus"/>
    <property type="evidence" value="ECO:0007669"/>
    <property type="project" value="UniProtKB-SubCell"/>
</dbReference>
<dbReference type="GO" id="GO:0016020">
    <property type="term" value="C:membrane"/>
    <property type="evidence" value="ECO:0007669"/>
    <property type="project" value="UniProtKB-UniRule"/>
</dbReference>
<dbReference type="GO" id="GO:0039545">
    <property type="term" value="P:symbiont-mediated suppression of host cytoplasmic pattern recognition receptor signaling pathway via inhibition of MAVS activity"/>
    <property type="evidence" value="ECO:0000250"/>
    <property type="project" value="UniProtKB"/>
</dbReference>
<dbReference type="HAMAP" id="MF_04064">
    <property type="entry name" value="INFV_PB1F2"/>
    <property type="match status" value="1"/>
</dbReference>
<dbReference type="InterPro" id="IPR021045">
    <property type="entry name" value="Flu_proapoptotic_PB1-F2"/>
</dbReference>
<dbReference type="Pfam" id="PF11986">
    <property type="entry name" value="PB1-F2"/>
    <property type="match status" value="1"/>
</dbReference>
<organismHost>
    <name type="scientific">Aves</name>
    <dbReference type="NCBI Taxonomy" id="8782"/>
</organismHost>
<organismHost>
    <name type="scientific">Homo sapiens</name>
    <name type="common">Human</name>
    <dbReference type="NCBI Taxonomy" id="9606"/>
</organismHost>
<organismHost>
    <name type="scientific">Sus scrofa</name>
    <name type="common">Pig</name>
    <dbReference type="NCBI Taxonomy" id="9823"/>
</organismHost>
<name>PB1F2_I51A0</name>
<feature type="chain" id="PRO_0000373018" description="Protein PB1-F2">
    <location>
        <begin position="1"/>
        <end position="57"/>
    </location>
</feature>
<feature type="region of interest" description="Disordered" evidence="2">
    <location>
        <begin position="1"/>
        <end position="30"/>
    </location>
</feature>
<feature type="compositionally biased region" description="Basic and acidic residues" evidence="2">
    <location>
        <begin position="20"/>
        <end position="30"/>
    </location>
</feature>
<accession>A4U7B5</accession>
<organism>
    <name type="scientific">Influenza A virus (strain A/USA:Albany/12/1951 H1N1)</name>
    <dbReference type="NCBI Taxonomy" id="425580"/>
    <lineage>
        <taxon>Viruses</taxon>
        <taxon>Riboviria</taxon>
        <taxon>Orthornavirae</taxon>
        <taxon>Negarnaviricota</taxon>
        <taxon>Polyploviricotina</taxon>
        <taxon>Insthoviricetes</taxon>
        <taxon>Articulavirales</taxon>
        <taxon>Orthomyxoviridae</taxon>
        <taxon>Alphainfluenzavirus</taxon>
        <taxon>Alphainfluenzavirus influenzae</taxon>
        <taxon>Influenza A virus</taxon>
    </lineage>
</organism>
<keyword id="KW-1035">Host cytoplasm</keyword>
<keyword id="KW-1048">Host nucleus</keyword>
<protein>
    <recommendedName>
        <fullName evidence="1">Protein PB1-F2</fullName>
    </recommendedName>
</protein>
<comment type="function">
    <text evidence="1">May play an important role in promoting lung pathology in both primary viral infection and secondary bacterial infection.</text>
</comment>
<comment type="subcellular location">
    <subcellularLocation>
        <location evidence="1">Host nucleus</location>
    </subcellularLocation>
    <subcellularLocation>
        <location evidence="1">Host cytoplasm</location>
        <location evidence="1">Host cytosol</location>
    </subcellularLocation>
</comment>
<comment type="miscellaneous">
    <text>Is not encoded in all strains, and seems to be dispensable for replication.</text>
</comment>
<comment type="similarity">
    <text evidence="1">Belongs to the influenza viruses PB1-F2 family.</text>
</comment>
<gene>
    <name evidence="1" type="primary">PB1</name>
    <name type="synonym">PB1-F2</name>
</gene>
<evidence type="ECO:0000255" key="1">
    <source>
        <dbReference type="HAMAP-Rule" id="MF_04064"/>
    </source>
</evidence>
<evidence type="ECO:0000256" key="2">
    <source>
        <dbReference type="SAM" id="MobiDB-lite"/>
    </source>
</evidence>
<reference key="1">
    <citation type="submission" date="2007-04" db="EMBL/GenBank/DDBJ databases">
        <title>The NIAID influenza genome sequencing project.</title>
        <authorList>
            <person name="Spiro D."/>
            <person name="Sengamalay N."/>
            <person name="Boyne A."/>
            <person name="Bera J."/>
            <person name="Ghedin E."/>
            <person name="Zaborsky J."/>
            <person name="Subbu V."/>
            <person name="Sparenborg J."/>
            <person name="Gallagher T."/>
            <person name="Overton L."/>
            <person name="Althoff R."/>
            <person name="Liu X."/>
            <person name="Sitz J."/>
            <person name="Katzel D."/>
            <person name="Neupane R."/>
            <person name="Shumway M."/>
            <person name="Koo H."/>
            <person name="Griesemer S."/>
            <person name="StGeorge K."/>
            <person name="Bennett R."/>
            <person name="Taylor J."/>
            <person name="Bao Y."/>
            <person name="Bolotov P."/>
            <person name="Dernovoy D."/>
            <person name="Kiryutin B."/>
            <person name="Lipman D.J."/>
            <person name="Tatusova T."/>
        </authorList>
    </citation>
    <scope>NUCLEOTIDE SEQUENCE [GENOMIC RNA]</scope>
</reference>
<reference key="2">
    <citation type="submission" date="2007-04" db="EMBL/GenBank/DDBJ databases">
        <authorList>
            <consortium name="The NIAID Influenza Genome Sequencing Consortium"/>
        </authorList>
    </citation>
    <scope>NUCLEOTIDE SEQUENCE [GENOMIC RNA]</scope>
</reference>
<proteinExistence type="inferred from homology"/>